<name>HIS6_SHIBS</name>
<sequence>MLAKRIIPCLDVRDGQVVKGVQFRNHEIIGDIVPLAKRYAEEGADELVFYDITASSDGRVVDKSWVSRVAEVIDIPFCVAGGIKSLEDAAKILSFGADKISINSPALADPTLITRLADRFGVQCIVVGIDTWYDAETGKYHVNQYTGDESRTRVTQWETLDWVQEVQKRGAGEVVLNMMNQDGVRNGYDLEQLKKVREVCHVPLIASGGAGTMEHFLEAFRDADVDGALAASVFHKQIINIGELKAYLATQGVEIRIC</sequence>
<comment type="function">
    <text evidence="1">IGPS catalyzes the conversion of PRFAR and glutamine to IGP, AICAR and glutamate. The HisF subunit catalyzes the cyclization activity that produces IGP and AICAR from PRFAR using the ammonia provided by the HisH subunit.</text>
</comment>
<comment type="catalytic activity">
    <reaction evidence="1">
        <text>5-[(5-phospho-1-deoxy-D-ribulos-1-ylimino)methylamino]-1-(5-phospho-beta-D-ribosyl)imidazole-4-carboxamide + L-glutamine = D-erythro-1-(imidazol-4-yl)glycerol 3-phosphate + 5-amino-1-(5-phospho-beta-D-ribosyl)imidazole-4-carboxamide + L-glutamate + H(+)</text>
        <dbReference type="Rhea" id="RHEA:24793"/>
        <dbReference type="ChEBI" id="CHEBI:15378"/>
        <dbReference type="ChEBI" id="CHEBI:29985"/>
        <dbReference type="ChEBI" id="CHEBI:58278"/>
        <dbReference type="ChEBI" id="CHEBI:58359"/>
        <dbReference type="ChEBI" id="CHEBI:58475"/>
        <dbReference type="ChEBI" id="CHEBI:58525"/>
        <dbReference type="EC" id="4.3.2.10"/>
    </reaction>
</comment>
<comment type="pathway">
    <text evidence="1">Amino-acid biosynthesis; L-histidine biosynthesis; L-histidine from 5-phospho-alpha-D-ribose 1-diphosphate: step 5/9.</text>
</comment>
<comment type="subunit">
    <text evidence="1">Heterodimer of HisH and HisF.</text>
</comment>
<comment type="subcellular location">
    <subcellularLocation>
        <location evidence="1">Cytoplasm</location>
    </subcellularLocation>
</comment>
<comment type="similarity">
    <text evidence="1">Belongs to the HisA/HisF family.</text>
</comment>
<dbReference type="EC" id="4.3.2.10" evidence="1"/>
<dbReference type="EMBL" id="CP000036">
    <property type="protein sequence ID" value="ABB65521.1"/>
    <property type="molecule type" value="Genomic_DNA"/>
</dbReference>
<dbReference type="RefSeq" id="WP_000880186.1">
    <property type="nucleotide sequence ID" value="NC_007613.1"/>
</dbReference>
<dbReference type="SMR" id="Q323I7"/>
<dbReference type="KEGG" id="sbo:SBO_0851"/>
<dbReference type="HOGENOM" id="CLU_048577_4_0_6"/>
<dbReference type="UniPathway" id="UPA00031">
    <property type="reaction ID" value="UER00010"/>
</dbReference>
<dbReference type="Proteomes" id="UP000007067">
    <property type="component" value="Chromosome"/>
</dbReference>
<dbReference type="GO" id="GO:0005737">
    <property type="term" value="C:cytoplasm"/>
    <property type="evidence" value="ECO:0007669"/>
    <property type="project" value="UniProtKB-SubCell"/>
</dbReference>
<dbReference type="GO" id="GO:0000107">
    <property type="term" value="F:imidazoleglycerol-phosphate synthase activity"/>
    <property type="evidence" value="ECO:0007669"/>
    <property type="project" value="UniProtKB-UniRule"/>
</dbReference>
<dbReference type="GO" id="GO:0016829">
    <property type="term" value="F:lyase activity"/>
    <property type="evidence" value="ECO:0007669"/>
    <property type="project" value="UniProtKB-KW"/>
</dbReference>
<dbReference type="GO" id="GO:0000105">
    <property type="term" value="P:L-histidine biosynthetic process"/>
    <property type="evidence" value="ECO:0007669"/>
    <property type="project" value="UniProtKB-UniRule"/>
</dbReference>
<dbReference type="CDD" id="cd04731">
    <property type="entry name" value="HisF"/>
    <property type="match status" value="1"/>
</dbReference>
<dbReference type="FunFam" id="3.20.20.70:FF:000006">
    <property type="entry name" value="Imidazole glycerol phosphate synthase subunit HisF"/>
    <property type="match status" value="1"/>
</dbReference>
<dbReference type="Gene3D" id="3.20.20.70">
    <property type="entry name" value="Aldolase class I"/>
    <property type="match status" value="1"/>
</dbReference>
<dbReference type="HAMAP" id="MF_01013">
    <property type="entry name" value="HisF"/>
    <property type="match status" value="1"/>
</dbReference>
<dbReference type="InterPro" id="IPR013785">
    <property type="entry name" value="Aldolase_TIM"/>
</dbReference>
<dbReference type="InterPro" id="IPR006062">
    <property type="entry name" value="His_biosynth"/>
</dbReference>
<dbReference type="InterPro" id="IPR004651">
    <property type="entry name" value="HisF"/>
</dbReference>
<dbReference type="InterPro" id="IPR050064">
    <property type="entry name" value="IGPS_HisA/HisF"/>
</dbReference>
<dbReference type="InterPro" id="IPR011060">
    <property type="entry name" value="RibuloseP-bd_barrel"/>
</dbReference>
<dbReference type="NCBIfam" id="TIGR00735">
    <property type="entry name" value="hisF"/>
    <property type="match status" value="1"/>
</dbReference>
<dbReference type="PANTHER" id="PTHR21235:SF2">
    <property type="entry name" value="IMIDAZOLE GLYCEROL PHOSPHATE SYNTHASE HISHF"/>
    <property type="match status" value="1"/>
</dbReference>
<dbReference type="PANTHER" id="PTHR21235">
    <property type="entry name" value="IMIDAZOLE GLYCEROL PHOSPHATE SYNTHASE SUBUNIT HISF/H IGP SYNTHASE SUBUNIT HISF/H"/>
    <property type="match status" value="1"/>
</dbReference>
<dbReference type="Pfam" id="PF00977">
    <property type="entry name" value="His_biosynth"/>
    <property type="match status" value="1"/>
</dbReference>
<dbReference type="SUPFAM" id="SSF51366">
    <property type="entry name" value="Ribulose-phoshate binding barrel"/>
    <property type="match status" value="1"/>
</dbReference>
<reference key="1">
    <citation type="journal article" date="2005" name="Nucleic Acids Res.">
        <title>Genome dynamics and diversity of Shigella species, the etiologic agents of bacillary dysentery.</title>
        <authorList>
            <person name="Yang F."/>
            <person name="Yang J."/>
            <person name="Zhang X."/>
            <person name="Chen L."/>
            <person name="Jiang Y."/>
            <person name="Yan Y."/>
            <person name="Tang X."/>
            <person name="Wang J."/>
            <person name="Xiong Z."/>
            <person name="Dong J."/>
            <person name="Xue Y."/>
            <person name="Zhu Y."/>
            <person name="Xu X."/>
            <person name="Sun L."/>
            <person name="Chen S."/>
            <person name="Nie H."/>
            <person name="Peng J."/>
            <person name="Xu J."/>
            <person name="Wang Y."/>
            <person name="Yuan Z."/>
            <person name="Wen Y."/>
            <person name="Yao Z."/>
            <person name="Shen Y."/>
            <person name="Qiang B."/>
            <person name="Hou Y."/>
            <person name="Yu J."/>
            <person name="Jin Q."/>
        </authorList>
    </citation>
    <scope>NUCLEOTIDE SEQUENCE [LARGE SCALE GENOMIC DNA]</scope>
    <source>
        <strain>Sb227</strain>
    </source>
</reference>
<organism>
    <name type="scientific">Shigella boydii serotype 4 (strain Sb227)</name>
    <dbReference type="NCBI Taxonomy" id="300268"/>
    <lineage>
        <taxon>Bacteria</taxon>
        <taxon>Pseudomonadati</taxon>
        <taxon>Pseudomonadota</taxon>
        <taxon>Gammaproteobacteria</taxon>
        <taxon>Enterobacterales</taxon>
        <taxon>Enterobacteriaceae</taxon>
        <taxon>Shigella</taxon>
    </lineage>
</organism>
<protein>
    <recommendedName>
        <fullName evidence="1">Imidazole glycerol phosphate synthase subunit HisF</fullName>
        <ecNumber evidence="1">4.3.2.10</ecNumber>
    </recommendedName>
    <alternativeName>
        <fullName evidence="1">IGP synthase cyclase subunit</fullName>
    </alternativeName>
    <alternativeName>
        <fullName evidence="1">IGP synthase subunit HisF</fullName>
    </alternativeName>
    <alternativeName>
        <fullName evidence="1">ImGP synthase subunit HisF</fullName>
        <shortName evidence="1">IGPS subunit HisF</shortName>
    </alternativeName>
</protein>
<accession>Q323I7</accession>
<evidence type="ECO:0000255" key="1">
    <source>
        <dbReference type="HAMAP-Rule" id="MF_01013"/>
    </source>
</evidence>
<keyword id="KW-0028">Amino-acid biosynthesis</keyword>
<keyword id="KW-0963">Cytoplasm</keyword>
<keyword id="KW-0368">Histidine biosynthesis</keyword>
<keyword id="KW-0456">Lyase</keyword>
<proteinExistence type="inferred from homology"/>
<feature type="chain" id="PRO_0000142227" description="Imidazole glycerol phosphate synthase subunit HisF">
    <location>
        <begin position="1"/>
        <end position="258"/>
    </location>
</feature>
<feature type="active site" evidence="1">
    <location>
        <position position="11"/>
    </location>
</feature>
<feature type="active site" evidence="1">
    <location>
        <position position="130"/>
    </location>
</feature>
<gene>
    <name evidence="1" type="primary">hisF</name>
    <name type="ordered locus">SBO_0851</name>
</gene>